<comment type="function">
    <text evidence="1">Transferase that catalyzes the transfer of sulfur from thiosulfate to thiophilic acceptors such as cyanide or dithiols. May function in a CysM-independent thiosulfate assimilation pathway by catalyzing the conversion of thiosulfate to sulfite, which can then be used for L-cysteine biosynthesis.</text>
</comment>
<comment type="catalytic activity">
    <reaction evidence="1">
        <text>thiosulfate + hydrogen cyanide = thiocyanate + sulfite + 2 H(+)</text>
        <dbReference type="Rhea" id="RHEA:16881"/>
        <dbReference type="ChEBI" id="CHEBI:15378"/>
        <dbReference type="ChEBI" id="CHEBI:17359"/>
        <dbReference type="ChEBI" id="CHEBI:18022"/>
        <dbReference type="ChEBI" id="CHEBI:18407"/>
        <dbReference type="ChEBI" id="CHEBI:33542"/>
        <dbReference type="EC" id="2.8.1.1"/>
    </reaction>
</comment>
<comment type="catalytic activity">
    <reaction evidence="1">
        <text>thiosulfate + [thioredoxin]-dithiol = [thioredoxin]-disulfide + hydrogen sulfide + sulfite + 2 H(+)</text>
        <dbReference type="Rhea" id="RHEA:83859"/>
        <dbReference type="Rhea" id="RHEA-COMP:10698"/>
        <dbReference type="Rhea" id="RHEA-COMP:10700"/>
        <dbReference type="ChEBI" id="CHEBI:15378"/>
        <dbReference type="ChEBI" id="CHEBI:17359"/>
        <dbReference type="ChEBI" id="CHEBI:29919"/>
        <dbReference type="ChEBI" id="CHEBI:29950"/>
        <dbReference type="ChEBI" id="CHEBI:33542"/>
        <dbReference type="ChEBI" id="CHEBI:50058"/>
    </reaction>
</comment>
<comment type="subcellular location">
    <subcellularLocation>
        <location evidence="1">Cytoplasm</location>
    </subcellularLocation>
</comment>
<comment type="similarity">
    <text evidence="1">Belongs to the GlpE family.</text>
</comment>
<evidence type="ECO:0000255" key="1">
    <source>
        <dbReference type="HAMAP-Rule" id="MF_01009"/>
    </source>
</evidence>
<proteinExistence type="inferred from homology"/>
<reference key="1">
    <citation type="journal article" date="2008" name="J. Bacteriol.">
        <title>The pangenome structure of Escherichia coli: comparative genomic analysis of E. coli commensal and pathogenic isolates.</title>
        <authorList>
            <person name="Rasko D.A."/>
            <person name="Rosovitz M.J."/>
            <person name="Myers G.S.A."/>
            <person name="Mongodin E.F."/>
            <person name="Fricke W.F."/>
            <person name="Gajer P."/>
            <person name="Crabtree J."/>
            <person name="Sebaihia M."/>
            <person name="Thomson N.R."/>
            <person name="Chaudhuri R."/>
            <person name="Henderson I.R."/>
            <person name="Sperandio V."/>
            <person name="Ravel J."/>
        </authorList>
    </citation>
    <scope>NUCLEOTIDE SEQUENCE [LARGE SCALE GENOMIC DNA]</scope>
    <source>
        <strain>HS</strain>
    </source>
</reference>
<gene>
    <name evidence="1" type="primary">glpE</name>
    <name type="ordered locus">EcHS_A3622</name>
</gene>
<sequence length="108" mass="12082">MDQFECINVADAHQKLQEKEAVLVDIRDPQSFAMGHAVQAFHLTNDTLGAFMRDNDFDTPVMVMCYHGNSSKGAAQYLLQQGYDVVYSIDGGFEAWQRQFPAEVAYGA</sequence>
<organism>
    <name type="scientific">Escherichia coli O9:H4 (strain HS)</name>
    <dbReference type="NCBI Taxonomy" id="331112"/>
    <lineage>
        <taxon>Bacteria</taxon>
        <taxon>Pseudomonadati</taxon>
        <taxon>Pseudomonadota</taxon>
        <taxon>Gammaproteobacteria</taxon>
        <taxon>Enterobacterales</taxon>
        <taxon>Enterobacteriaceae</taxon>
        <taxon>Escherichia</taxon>
    </lineage>
</organism>
<feature type="chain" id="PRO_1000062957" description="Thiosulfate sulfurtransferase GlpE">
    <location>
        <begin position="1"/>
        <end position="108"/>
    </location>
</feature>
<feature type="domain" description="Rhodanese" evidence="1">
    <location>
        <begin position="17"/>
        <end position="105"/>
    </location>
</feature>
<feature type="active site" description="Cysteine persulfide intermediate" evidence="1">
    <location>
        <position position="65"/>
    </location>
</feature>
<protein>
    <recommendedName>
        <fullName evidence="1">Thiosulfate sulfurtransferase GlpE</fullName>
        <ecNumber evidence="1">2.8.1.1</ecNumber>
    </recommendedName>
</protein>
<accession>A8A5N3</accession>
<dbReference type="EC" id="2.8.1.1" evidence="1"/>
<dbReference type="EMBL" id="CP000802">
    <property type="protein sequence ID" value="ABV07837.1"/>
    <property type="molecule type" value="Genomic_DNA"/>
</dbReference>
<dbReference type="RefSeq" id="WP_000371928.1">
    <property type="nucleotide sequence ID" value="NC_009800.1"/>
</dbReference>
<dbReference type="BMRB" id="A8A5N3"/>
<dbReference type="SMR" id="A8A5N3"/>
<dbReference type="GeneID" id="93778571"/>
<dbReference type="KEGG" id="ecx:EcHS_A3622"/>
<dbReference type="HOGENOM" id="CLU_089574_14_0_6"/>
<dbReference type="GO" id="GO:0005737">
    <property type="term" value="C:cytoplasm"/>
    <property type="evidence" value="ECO:0007669"/>
    <property type="project" value="UniProtKB-SubCell"/>
</dbReference>
<dbReference type="GO" id="GO:0004792">
    <property type="term" value="F:thiosulfate-cyanide sulfurtransferase activity"/>
    <property type="evidence" value="ECO:0007669"/>
    <property type="project" value="UniProtKB-UniRule"/>
</dbReference>
<dbReference type="GO" id="GO:0006071">
    <property type="term" value="P:glycerol metabolic process"/>
    <property type="evidence" value="ECO:0007669"/>
    <property type="project" value="UniProtKB-UniRule"/>
</dbReference>
<dbReference type="CDD" id="cd01444">
    <property type="entry name" value="GlpE_ST"/>
    <property type="match status" value="1"/>
</dbReference>
<dbReference type="FunFam" id="3.40.250.10:FF:000007">
    <property type="entry name" value="Thiosulfate sulfurtransferase GlpE"/>
    <property type="match status" value="1"/>
</dbReference>
<dbReference type="Gene3D" id="3.40.250.10">
    <property type="entry name" value="Rhodanese-like domain"/>
    <property type="match status" value="1"/>
</dbReference>
<dbReference type="HAMAP" id="MF_01009">
    <property type="entry name" value="Thiosulf_sulfurtr"/>
    <property type="match status" value="1"/>
</dbReference>
<dbReference type="InterPro" id="IPR050229">
    <property type="entry name" value="GlpE_sulfurtransferase"/>
</dbReference>
<dbReference type="InterPro" id="IPR001763">
    <property type="entry name" value="Rhodanese-like_dom"/>
</dbReference>
<dbReference type="InterPro" id="IPR036873">
    <property type="entry name" value="Rhodanese-like_dom_sf"/>
</dbReference>
<dbReference type="InterPro" id="IPR023695">
    <property type="entry name" value="Thiosulf_sulfurTrfase"/>
</dbReference>
<dbReference type="NCBIfam" id="NF001195">
    <property type="entry name" value="PRK00162.1"/>
    <property type="match status" value="1"/>
</dbReference>
<dbReference type="PANTHER" id="PTHR43031">
    <property type="entry name" value="FAD-DEPENDENT OXIDOREDUCTASE"/>
    <property type="match status" value="1"/>
</dbReference>
<dbReference type="PANTHER" id="PTHR43031:SF6">
    <property type="entry name" value="THIOSULFATE SULFURTRANSFERASE GLPE"/>
    <property type="match status" value="1"/>
</dbReference>
<dbReference type="Pfam" id="PF00581">
    <property type="entry name" value="Rhodanese"/>
    <property type="match status" value="1"/>
</dbReference>
<dbReference type="SMART" id="SM00450">
    <property type="entry name" value="RHOD"/>
    <property type="match status" value="1"/>
</dbReference>
<dbReference type="SUPFAM" id="SSF52821">
    <property type="entry name" value="Rhodanese/Cell cycle control phosphatase"/>
    <property type="match status" value="1"/>
</dbReference>
<dbReference type="PROSITE" id="PS50206">
    <property type="entry name" value="RHODANESE_3"/>
    <property type="match status" value="1"/>
</dbReference>
<name>GLPE_ECOHS</name>
<keyword id="KW-0963">Cytoplasm</keyword>
<keyword id="KW-0808">Transferase</keyword>